<sequence length="238" mass="25390">MCGIKQEMSGESSGSPCSSASAERQHQTVWTAPPKRPAGRTKFRETRHPVFRGVRRRGNAGRWVCEVRVPGRRGCRLWLGTFDTAEGAARAHDAAMLAINAGGGGGGGACCLNFADSAWLLAVPRSYRTLADVRHAVAEAVEDFFRRRLADDALSATSSSSTTPSTPRTDDDEESAATDGDESSSPASDLAFELDVLSDMGWDLYYASLAQGMLMEPPSAALGDDGDAILADVPLWSY</sequence>
<name>DRE1A_ORYSJ</name>
<keyword id="KW-0010">Activator</keyword>
<keyword id="KW-0238">DNA-binding</keyword>
<keyword id="KW-0539">Nucleus</keyword>
<keyword id="KW-1185">Reference proteome</keyword>
<keyword id="KW-0346">Stress response</keyword>
<keyword id="KW-0804">Transcription</keyword>
<keyword id="KW-0805">Transcription regulation</keyword>
<organism>
    <name type="scientific">Oryza sativa subsp. japonica</name>
    <name type="common">Rice</name>
    <dbReference type="NCBI Taxonomy" id="39947"/>
    <lineage>
        <taxon>Eukaryota</taxon>
        <taxon>Viridiplantae</taxon>
        <taxon>Streptophyta</taxon>
        <taxon>Embryophyta</taxon>
        <taxon>Tracheophyta</taxon>
        <taxon>Spermatophyta</taxon>
        <taxon>Magnoliopsida</taxon>
        <taxon>Liliopsida</taxon>
        <taxon>Poales</taxon>
        <taxon>Poaceae</taxon>
        <taxon>BOP clade</taxon>
        <taxon>Oryzoideae</taxon>
        <taxon>Oryzeae</taxon>
        <taxon>Oryzinae</taxon>
        <taxon>Oryza</taxon>
        <taxon>Oryza sativa</taxon>
    </lineage>
</organism>
<dbReference type="EMBL" id="AF300970">
    <property type="protein sequence ID" value="AAN02486.1"/>
    <property type="molecule type" value="mRNA"/>
</dbReference>
<dbReference type="EMBL" id="AF494422">
    <property type="protein sequence ID" value="AAQ06658.1"/>
    <property type="molecule type" value="mRNA"/>
</dbReference>
<dbReference type="EMBL" id="AY345233">
    <property type="protein sequence ID" value="AAQ23983.1"/>
    <property type="molecule type" value="mRNA"/>
</dbReference>
<dbReference type="EMBL" id="AP006859">
    <property type="protein sequence ID" value="BAD46704.1"/>
    <property type="molecule type" value="Genomic_DNA"/>
</dbReference>
<dbReference type="EMBL" id="AP008215">
    <property type="protein sequence ID" value="BAF25626.1"/>
    <property type="molecule type" value="Genomic_DNA"/>
</dbReference>
<dbReference type="EMBL" id="AP014965">
    <property type="protein sequence ID" value="BAT09026.1"/>
    <property type="molecule type" value="Genomic_DNA"/>
</dbReference>
<dbReference type="EMBL" id="AK105599">
    <property type="status" value="NOT_ANNOTATED_CDS"/>
    <property type="molecule type" value="mRNA"/>
</dbReference>
<dbReference type="RefSeq" id="XP_015610912.1">
    <property type="nucleotide sequence ID" value="XM_015755426.1"/>
</dbReference>
<dbReference type="SMR" id="Q64MA1"/>
<dbReference type="FunCoup" id="Q64MA1">
    <property type="interactions" value="28"/>
</dbReference>
<dbReference type="STRING" id="39947.Q64MA1"/>
<dbReference type="PaxDb" id="39947-Q64MA1"/>
<dbReference type="EnsemblPlants" id="Os09t0522200-01">
    <property type="protein sequence ID" value="Os09t0522200-01"/>
    <property type="gene ID" value="Os09g0522200"/>
</dbReference>
<dbReference type="Gramene" id="Os09t0522200-01">
    <property type="protein sequence ID" value="Os09t0522200-01"/>
    <property type="gene ID" value="Os09g0522200"/>
</dbReference>
<dbReference type="KEGG" id="dosa:Os09g0522200"/>
<dbReference type="eggNOG" id="ENOG502SNA4">
    <property type="taxonomic scope" value="Eukaryota"/>
</dbReference>
<dbReference type="HOGENOM" id="CLU_063331_1_0_1"/>
<dbReference type="InParanoid" id="Q64MA1"/>
<dbReference type="OMA" id="EMDVFND"/>
<dbReference type="OrthoDB" id="778167at2759"/>
<dbReference type="Proteomes" id="UP000000763">
    <property type="component" value="Chromosome 9"/>
</dbReference>
<dbReference type="Proteomes" id="UP000059680">
    <property type="component" value="Chromosome 9"/>
</dbReference>
<dbReference type="GO" id="GO:0005634">
    <property type="term" value="C:nucleus"/>
    <property type="evidence" value="ECO:0007669"/>
    <property type="project" value="UniProtKB-SubCell"/>
</dbReference>
<dbReference type="GO" id="GO:0003677">
    <property type="term" value="F:DNA binding"/>
    <property type="evidence" value="ECO:0007669"/>
    <property type="project" value="UniProtKB-KW"/>
</dbReference>
<dbReference type="GO" id="GO:0003700">
    <property type="term" value="F:DNA-binding transcription factor activity"/>
    <property type="evidence" value="ECO:0007669"/>
    <property type="project" value="InterPro"/>
</dbReference>
<dbReference type="CDD" id="cd00018">
    <property type="entry name" value="AP2"/>
    <property type="match status" value="1"/>
</dbReference>
<dbReference type="Gene3D" id="3.30.730.10">
    <property type="entry name" value="AP2/ERF domain"/>
    <property type="match status" value="1"/>
</dbReference>
<dbReference type="InterPro" id="IPR001471">
    <property type="entry name" value="AP2/ERF_dom"/>
</dbReference>
<dbReference type="InterPro" id="IPR036955">
    <property type="entry name" value="AP2/ERF_dom_sf"/>
</dbReference>
<dbReference type="InterPro" id="IPR016177">
    <property type="entry name" value="DNA-bd_dom_sf"/>
</dbReference>
<dbReference type="InterPro" id="IPR045277">
    <property type="entry name" value="DRE1A-I"/>
</dbReference>
<dbReference type="PANTHER" id="PTHR31839:SF10">
    <property type="entry name" value="DEHYDRATION-RESPONSIVE ELEMENT-BINDING PROTEIN 1A"/>
    <property type="match status" value="1"/>
</dbReference>
<dbReference type="PANTHER" id="PTHR31839">
    <property type="entry name" value="DEHYDRATION-RESPONSIVE ELEMENT-BINDING PROTEIN 1D"/>
    <property type="match status" value="1"/>
</dbReference>
<dbReference type="Pfam" id="PF00847">
    <property type="entry name" value="AP2"/>
    <property type="match status" value="1"/>
</dbReference>
<dbReference type="PRINTS" id="PR00367">
    <property type="entry name" value="ETHRSPELEMNT"/>
</dbReference>
<dbReference type="SMART" id="SM00380">
    <property type="entry name" value="AP2"/>
    <property type="match status" value="1"/>
</dbReference>
<dbReference type="SUPFAM" id="SSF54171">
    <property type="entry name" value="DNA-binding domain"/>
    <property type="match status" value="1"/>
</dbReference>
<dbReference type="PROSITE" id="PS51032">
    <property type="entry name" value="AP2_ERF"/>
    <property type="match status" value="1"/>
</dbReference>
<reference key="1">
    <citation type="journal article" date="2003" name="Plant J.">
        <title>OsDREB genes in rice, Oryza sativa L., encode transcription activators that function in drought-, high-salt- and cold-responsive gene expression.</title>
        <authorList>
            <person name="Dubouzet J.G."/>
            <person name="Sakuma Y."/>
            <person name="Ito Y."/>
            <person name="Kasuga M."/>
            <person name="Dubouzet E.G."/>
            <person name="Miura S."/>
            <person name="Seki M."/>
            <person name="Shinozaki K."/>
            <person name="Yamaguchi-Shinozaki K."/>
        </authorList>
    </citation>
    <scope>NUCLEOTIDE SEQUENCE [MRNA]</scope>
    <scope>FUNCTION</scope>
    <scope>INDUCTION BY COLD</scope>
    <scope>GENE FAMILY</scope>
</reference>
<reference key="2">
    <citation type="submission" date="2002-03" db="EMBL/GenBank/DDBJ databases">
        <title>Isolation and characterization of a DREB1-like gene in rice.</title>
        <authorList>
            <person name="Chen J."/>
            <person name="Chen S."/>
        </authorList>
    </citation>
    <scope>NUCLEOTIDE SEQUENCE [MRNA]</scope>
</reference>
<reference key="3">
    <citation type="submission" date="2003-07" db="EMBL/GenBank/DDBJ databases">
        <title>Isolation of rice DREBs, transcription factors involved in dehydration- and cold-inducible gene expression.</title>
        <authorList>
            <person name="Yao Q."/>
            <person name="Peng R."/>
            <person name="Xiong A."/>
        </authorList>
    </citation>
    <scope>NUCLEOTIDE SEQUENCE [MRNA]</scope>
</reference>
<reference key="4">
    <citation type="journal article" date="2005" name="Nature">
        <title>The map-based sequence of the rice genome.</title>
        <authorList>
            <consortium name="International rice genome sequencing project (IRGSP)"/>
        </authorList>
    </citation>
    <scope>NUCLEOTIDE SEQUENCE [LARGE SCALE GENOMIC DNA]</scope>
    <source>
        <strain>cv. Nipponbare</strain>
    </source>
</reference>
<reference key="5">
    <citation type="journal article" date="2008" name="Nucleic Acids Res.">
        <title>The rice annotation project database (RAP-DB): 2008 update.</title>
        <authorList>
            <consortium name="The rice annotation project (RAP)"/>
        </authorList>
    </citation>
    <scope>GENOME REANNOTATION</scope>
    <source>
        <strain>cv. Nipponbare</strain>
    </source>
</reference>
<reference key="6">
    <citation type="journal article" date="2013" name="Rice">
        <title>Improvement of the Oryza sativa Nipponbare reference genome using next generation sequence and optical map data.</title>
        <authorList>
            <person name="Kawahara Y."/>
            <person name="de la Bastide M."/>
            <person name="Hamilton J.P."/>
            <person name="Kanamori H."/>
            <person name="McCombie W.R."/>
            <person name="Ouyang S."/>
            <person name="Schwartz D.C."/>
            <person name="Tanaka T."/>
            <person name="Wu J."/>
            <person name="Zhou S."/>
            <person name="Childs K.L."/>
            <person name="Davidson R.M."/>
            <person name="Lin H."/>
            <person name="Quesada-Ocampo L."/>
            <person name="Vaillancourt B."/>
            <person name="Sakai H."/>
            <person name="Lee S.S."/>
            <person name="Kim J."/>
            <person name="Numa H."/>
            <person name="Itoh T."/>
            <person name="Buell C.R."/>
            <person name="Matsumoto T."/>
        </authorList>
    </citation>
    <scope>GENOME REANNOTATION</scope>
    <source>
        <strain>cv. Nipponbare</strain>
    </source>
</reference>
<reference key="7">
    <citation type="journal article" date="2003" name="Science">
        <title>Collection, mapping, and annotation of over 28,000 cDNA clones from japonica rice.</title>
        <authorList>
            <consortium name="The rice full-length cDNA consortium"/>
        </authorList>
    </citation>
    <scope>NUCLEOTIDE SEQUENCE [LARGE SCALE MRNA]</scope>
    <source>
        <strain>cv. Nipponbare</strain>
    </source>
</reference>
<reference key="8">
    <citation type="journal article" date="2006" name="Plant Cell Physiol.">
        <title>Functional analysis of rice DREB1/CBF-type transcription factors involved in cold-responsive gene expression in transgenic rice.</title>
        <authorList>
            <person name="Ito Y."/>
            <person name="Katsura K."/>
            <person name="Maruyama K."/>
            <person name="Taji T."/>
            <person name="Kobayashi M."/>
            <person name="Seki M."/>
            <person name="Shinozaki K."/>
            <person name="Yamaguchi-Shinozaki K."/>
        </authorList>
    </citation>
    <scope>FUNCTION</scope>
</reference>
<reference key="9">
    <citation type="journal article" date="2005" name="Plant Mol. Biol.">
        <title>Structural, functional, and phylogenetic characterization of a large CBF gene family in barley.</title>
        <authorList>
            <person name="Skinner J.S."/>
            <person name="von Zitzewitz J."/>
            <person name="Szuecs P."/>
            <person name="Marquez-Cedillo L."/>
            <person name="Filichkin T."/>
            <person name="Amundsen K."/>
            <person name="Stockinger E.J."/>
            <person name="Thomashow M.F."/>
            <person name="Chen T.H.H."/>
            <person name="Hayes P.M."/>
        </authorList>
    </citation>
    <scope>GENE FAMILY</scope>
    <source>
        <strain>cv. Nipponbare</strain>
    </source>
</reference>
<reference key="10">
    <citation type="journal article" date="2006" name="Plant Physiol.">
        <title>Genome-wide analysis of the ERF gene family in Arabidopsis and rice.</title>
        <authorList>
            <person name="Nakano T."/>
            <person name="Suzuki K."/>
            <person name="Fujimura T."/>
            <person name="Shinshi H."/>
        </authorList>
    </citation>
    <scope>GENE FAMILY</scope>
    <scope>NOMENCLATURE</scope>
</reference>
<evidence type="ECO:0000255" key="1">
    <source>
        <dbReference type="PROSITE-ProRule" id="PRU00366"/>
    </source>
</evidence>
<evidence type="ECO:0000256" key="2">
    <source>
        <dbReference type="SAM" id="MobiDB-lite"/>
    </source>
</evidence>
<evidence type="ECO:0000269" key="3">
    <source>
    </source>
</evidence>
<evidence type="ECO:0000269" key="4">
    <source>
    </source>
</evidence>
<evidence type="ECO:0000305" key="5"/>
<protein>
    <recommendedName>
        <fullName>Dehydration-responsive element-binding protein 1A</fullName>
        <shortName>Protein DREB1A</shortName>
    </recommendedName>
    <alternativeName>
        <fullName>Protein C-repeat-binding factor 3</fullName>
        <shortName>rCBF3</shortName>
    </alternativeName>
</protein>
<feature type="chain" id="PRO_0000323039" description="Dehydration-responsive element-binding protein 1A">
    <location>
        <begin position="1"/>
        <end position="238"/>
    </location>
</feature>
<feature type="DNA-binding region" description="AP2/ERF" evidence="1">
    <location>
        <begin position="50"/>
        <end position="115"/>
    </location>
</feature>
<feature type="region of interest" description="Disordered" evidence="2">
    <location>
        <begin position="1"/>
        <end position="41"/>
    </location>
</feature>
<feature type="region of interest" description="Disordered" evidence="2">
    <location>
        <begin position="155"/>
        <end position="188"/>
    </location>
</feature>
<feature type="compositionally biased region" description="Low complexity" evidence="2">
    <location>
        <begin position="9"/>
        <end position="22"/>
    </location>
</feature>
<feature type="compositionally biased region" description="Low complexity" evidence="2">
    <location>
        <begin position="155"/>
        <end position="167"/>
    </location>
</feature>
<feature type="compositionally biased region" description="Acidic residues" evidence="2">
    <location>
        <begin position="170"/>
        <end position="182"/>
    </location>
</feature>
<feature type="sequence conflict" description="In Ref. 3; AAQ23983." evidence="5" ref="3">
    <original>P</original>
    <variation>R</variation>
    <location>
        <position position="124"/>
    </location>
</feature>
<feature type="sequence conflict" description="In Ref. 2; AAQ06658." evidence="5" ref="2">
    <original>D</original>
    <variation>E</variation>
    <location>
        <position position="172"/>
    </location>
</feature>
<feature type="sequence conflict" description="In Ref. 7; AK105599." evidence="5" ref="7">
    <original>S</original>
    <variation>P</variation>
    <location>
        <position position="183"/>
    </location>
</feature>
<gene>
    <name type="primary">DREB1A</name>
    <name type="synonym">CBF3</name>
    <name type="synonym">ERF24</name>
    <name type="ordered locus">Os09g0522200</name>
    <name type="ordered locus">LOC_Os09g35030</name>
    <name type="ORF">OSJNOa273B05.11</name>
</gene>
<comment type="function">
    <text evidence="3 4">Transcriptional activator that binds specifically to the DNA sequence 5'-[AG]CCGAC-3'. Binding to the C-repeat/DRE element mediates high salinity- and dehydration-inducible transcription. Confers resistance to high salt, cold and drought stress.</text>
</comment>
<comment type="subcellular location">
    <subcellularLocation>
        <location evidence="5">Nucleus</location>
    </subcellularLocation>
</comment>
<comment type="induction">
    <text evidence="3">By high-salt and cold stress.</text>
</comment>
<comment type="similarity">
    <text evidence="5">Belongs to the AP2/ERF transcription factor family. ERF subfamily.</text>
</comment>
<accession>Q64MA1</accession>
<accession>A0A0N7KR49</accession>
<accession>Q6VAL0</accession>
<accession>Q71JC4</accession>
<accession>Q8LLV0</accession>
<proteinExistence type="evidence at transcript level"/>